<organism>
    <name type="scientific">Schizosaccharomyces pombe (strain 972 / ATCC 24843)</name>
    <name type="common">Fission yeast</name>
    <dbReference type="NCBI Taxonomy" id="284812"/>
    <lineage>
        <taxon>Eukaryota</taxon>
        <taxon>Fungi</taxon>
        <taxon>Dikarya</taxon>
        <taxon>Ascomycota</taxon>
        <taxon>Taphrinomycotina</taxon>
        <taxon>Schizosaccharomycetes</taxon>
        <taxon>Schizosaccharomycetales</taxon>
        <taxon>Schizosaccharomycetaceae</taxon>
        <taxon>Schizosaccharomyces</taxon>
    </lineage>
</organism>
<proteinExistence type="inferred from homology"/>
<protein>
    <recommendedName>
        <fullName>Uncharacterized methyltransferase C750.03c</fullName>
        <ecNumber>2.1.1.-</ecNumber>
    </recommendedName>
</protein>
<dbReference type="EC" id="2.1.1.-"/>
<dbReference type="EMBL" id="CU329670">
    <property type="protein sequence ID" value="CAB98254.1"/>
    <property type="molecule type" value="Genomic_DNA"/>
</dbReference>
<dbReference type="RefSeq" id="NP_595029.1">
    <property type="nucleotide sequence ID" value="NM_001020459.1"/>
</dbReference>
<dbReference type="SMR" id="Q9P3E7"/>
<dbReference type="FunCoup" id="Q9P3E7">
    <property type="interactions" value="197"/>
</dbReference>
<dbReference type="STRING" id="284812.Q9P3E7"/>
<dbReference type="PaxDb" id="4896-SPAC750.03c.1"/>
<dbReference type="EnsemblFungi" id="SPAC750.03c.1">
    <property type="protein sequence ID" value="SPAC750.03c.1:pep"/>
    <property type="gene ID" value="SPAC750.03c"/>
</dbReference>
<dbReference type="KEGG" id="spo:2542647"/>
<dbReference type="PomBase" id="SPAC750.03c"/>
<dbReference type="VEuPathDB" id="FungiDB:SPAC750.03c"/>
<dbReference type="HOGENOM" id="CLU_1787942_0_0_1"/>
<dbReference type="InParanoid" id="Q9P3E7"/>
<dbReference type="PhylomeDB" id="Q9P3E7"/>
<dbReference type="PRO" id="PR:Q9P3E7"/>
<dbReference type="Proteomes" id="UP000002485">
    <property type="component" value="Chromosome I"/>
</dbReference>
<dbReference type="GO" id="GO:0008168">
    <property type="term" value="F:methyltransferase activity"/>
    <property type="evidence" value="ECO:0000318"/>
    <property type="project" value="GO_Central"/>
</dbReference>
<dbReference type="GO" id="GO:0032259">
    <property type="term" value="P:methylation"/>
    <property type="evidence" value="ECO:0007669"/>
    <property type="project" value="UniProtKB-KW"/>
</dbReference>
<dbReference type="CDD" id="cd02440">
    <property type="entry name" value="AdoMet_MTases"/>
    <property type="match status" value="1"/>
</dbReference>
<dbReference type="FunFam" id="3.40.50.150:FF:000850">
    <property type="entry name" value="Uncharacterized methyltransferase C977.03"/>
    <property type="match status" value="1"/>
</dbReference>
<dbReference type="Gene3D" id="3.40.50.150">
    <property type="entry name" value="Vaccinia Virus protein VP39"/>
    <property type="match status" value="1"/>
</dbReference>
<dbReference type="InterPro" id="IPR041698">
    <property type="entry name" value="Methyltransf_25"/>
</dbReference>
<dbReference type="InterPro" id="IPR029063">
    <property type="entry name" value="SAM-dependent_MTases_sf"/>
</dbReference>
<dbReference type="PANTHER" id="PTHR43464:SF23">
    <property type="entry name" value="JUVENILE HORMONE ACID O-METHYLTRANSFERASE"/>
    <property type="match status" value="1"/>
</dbReference>
<dbReference type="PANTHER" id="PTHR43464">
    <property type="entry name" value="METHYLTRANSFERASE"/>
    <property type="match status" value="1"/>
</dbReference>
<dbReference type="Pfam" id="PF13649">
    <property type="entry name" value="Methyltransf_25"/>
    <property type="match status" value="1"/>
</dbReference>
<dbReference type="SUPFAM" id="SSF53335">
    <property type="entry name" value="S-adenosyl-L-methionine-dependent methyltransferases"/>
    <property type="match status" value="1"/>
</dbReference>
<keyword id="KW-0489">Methyltransferase</keyword>
<keyword id="KW-1185">Reference proteome</keyword>
<keyword id="KW-0808">Transferase</keyword>
<evidence type="ECO:0000250" key="1"/>
<evidence type="ECO:0000305" key="2"/>
<name>YLZ3_SCHPO</name>
<accession>Q9P3E7</accession>
<feature type="chain" id="PRO_0000339150" description="Uncharacterized methyltransferase C750.03c">
    <location>
        <begin position="1"/>
        <end position="145"/>
    </location>
</feature>
<sequence length="145" mass="16588">MNLLQLGKLHENVLDAGCEPNRNARYLASLGYKVVGIDISERAISKAIDKTSSEKSNVNFNQRDFSRLNEFKGHFDTVIDIGCFHSILNSDHEPYTASLSHICHSDSSVFLRAFSETNKSRYRRWQGHKRYSLALKRNNVKKLSL</sequence>
<gene>
    <name type="ORF">SPAC750.03c</name>
</gene>
<reference key="1">
    <citation type="journal article" date="2002" name="Nature">
        <title>The genome sequence of Schizosaccharomyces pombe.</title>
        <authorList>
            <person name="Wood V."/>
            <person name="Gwilliam R."/>
            <person name="Rajandream M.A."/>
            <person name="Lyne M.H."/>
            <person name="Lyne R."/>
            <person name="Stewart A."/>
            <person name="Sgouros J.G."/>
            <person name="Peat N."/>
            <person name="Hayles J."/>
            <person name="Baker S.G."/>
            <person name="Basham D."/>
            <person name="Bowman S."/>
            <person name="Brooks K."/>
            <person name="Brown D."/>
            <person name="Brown S."/>
            <person name="Chillingworth T."/>
            <person name="Churcher C.M."/>
            <person name="Collins M."/>
            <person name="Connor R."/>
            <person name="Cronin A."/>
            <person name="Davis P."/>
            <person name="Feltwell T."/>
            <person name="Fraser A."/>
            <person name="Gentles S."/>
            <person name="Goble A."/>
            <person name="Hamlin N."/>
            <person name="Harris D.E."/>
            <person name="Hidalgo J."/>
            <person name="Hodgson G."/>
            <person name="Holroyd S."/>
            <person name="Hornsby T."/>
            <person name="Howarth S."/>
            <person name="Huckle E.J."/>
            <person name="Hunt S."/>
            <person name="Jagels K."/>
            <person name="James K.D."/>
            <person name="Jones L."/>
            <person name="Jones M."/>
            <person name="Leather S."/>
            <person name="McDonald S."/>
            <person name="McLean J."/>
            <person name="Mooney P."/>
            <person name="Moule S."/>
            <person name="Mungall K.L."/>
            <person name="Murphy L.D."/>
            <person name="Niblett D."/>
            <person name="Odell C."/>
            <person name="Oliver K."/>
            <person name="O'Neil S."/>
            <person name="Pearson D."/>
            <person name="Quail M.A."/>
            <person name="Rabbinowitsch E."/>
            <person name="Rutherford K.M."/>
            <person name="Rutter S."/>
            <person name="Saunders D."/>
            <person name="Seeger K."/>
            <person name="Sharp S."/>
            <person name="Skelton J."/>
            <person name="Simmonds M.N."/>
            <person name="Squares R."/>
            <person name="Squares S."/>
            <person name="Stevens K."/>
            <person name="Taylor K."/>
            <person name="Taylor R.G."/>
            <person name="Tivey A."/>
            <person name="Walsh S.V."/>
            <person name="Warren T."/>
            <person name="Whitehead S."/>
            <person name="Woodward J.R."/>
            <person name="Volckaert G."/>
            <person name="Aert R."/>
            <person name="Robben J."/>
            <person name="Grymonprez B."/>
            <person name="Weltjens I."/>
            <person name="Vanstreels E."/>
            <person name="Rieger M."/>
            <person name="Schaefer M."/>
            <person name="Mueller-Auer S."/>
            <person name="Gabel C."/>
            <person name="Fuchs M."/>
            <person name="Duesterhoeft A."/>
            <person name="Fritzc C."/>
            <person name="Holzer E."/>
            <person name="Moestl D."/>
            <person name="Hilbert H."/>
            <person name="Borzym K."/>
            <person name="Langer I."/>
            <person name="Beck A."/>
            <person name="Lehrach H."/>
            <person name="Reinhardt R."/>
            <person name="Pohl T.M."/>
            <person name="Eger P."/>
            <person name="Zimmermann W."/>
            <person name="Wedler H."/>
            <person name="Wambutt R."/>
            <person name="Purnelle B."/>
            <person name="Goffeau A."/>
            <person name="Cadieu E."/>
            <person name="Dreano S."/>
            <person name="Gloux S."/>
            <person name="Lelaure V."/>
            <person name="Mottier S."/>
            <person name="Galibert F."/>
            <person name="Aves S.J."/>
            <person name="Xiang Z."/>
            <person name="Hunt C."/>
            <person name="Moore K."/>
            <person name="Hurst S.M."/>
            <person name="Lucas M."/>
            <person name="Rochet M."/>
            <person name="Gaillardin C."/>
            <person name="Tallada V.A."/>
            <person name="Garzon A."/>
            <person name="Thode G."/>
            <person name="Daga R.R."/>
            <person name="Cruzado L."/>
            <person name="Jimenez J."/>
            <person name="Sanchez M."/>
            <person name="del Rey F."/>
            <person name="Benito J."/>
            <person name="Dominguez A."/>
            <person name="Revuelta J.L."/>
            <person name="Moreno S."/>
            <person name="Armstrong J."/>
            <person name="Forsburg S.L."/>
            <person name="Cerutti L."/>
            <person name="Lowe T."/>
            <person name="McCombie W.R."/>
            <person name="Paulsen I."/>
            <person name="Potashkin J."/>
            <person name="Shpakovski G.V."/>
            <person name="Ussery D."/>
            <person name="Barrell B.G."/>
            <person name="Nurse P."/>
        </authorList>
    </citation>
    <scope>NUCLEOTIDE SEQUENCE [LARGE SCALE GENOMIC DNA]</scope>
    <source>
        <strain>972 / ATCC 24843</strain>
    </source>
</reference>
<comment type="function">
    <text evidence="1">Probable methyltransferase.</text>
</comment>
<comment type="similarity">
    <text evidence="2">Belongs to the methyltransferase superfamily.</text>
</comment>